<proteinExistence type="inferred from homology"/>
<protein>
    <recommendedName>
        <fullName>Uncharacterized protein HI_0093</fullName>
    </recommendedName>
</protein>
<name>Y093_HAEIN</name>
<feature type="chain" id="PRO_0000165946" description="Uncharacterized protein HI_0093">
    <location>
        <begin position="1"/>
        <end position="368"/>
    </location>
</feature>
<gene>
    <name type="ordered locus">HI_0093</name>
</gene>
<sequence>MQLDKYTAKKIVKRAMKIIHHSVNVMDHDGVIIASGNSTRLNQRHTGAVLALRENRVVEIDQALAQKWNFEAQPGINLPIHYLGKNIGVVGISGEPTQVKQYAELVKMTAELIVEQQALLEQESWHRRYKEEFILQLLHCNLNWKEMEQQAKFFSFDLNKSRVVVLIKLLNPALDNLQNLINYLEQSEFAQDVAILSLDQVVVLKTWQNSTVLSAQMKTLLPADYSKQDYKIAVGACLNLPLFEQLPLSFQSAQSTLSYGLKHHPRKGIYVFDEHRLPVLLAGLSHSWQGNELIKPLSPLFSEENAILYKTLQQYFLSNCDLYLTAEKLFVHPNTLRYRLNKIEQITGLFFNKIDDKLTLYLGTLLEH</sequence>
<evidence type="ECO:0000305" key="1"/>
<reference key="1">
    <citation type="journal article" date="1995" name="Science">
        <title>Whole-genome random sequencing and assembly of Haemophilus influenzae Rd.</title>
        <authorList>
            <person name="Fleischmann R.D."/>
            <person name="Adams M.D."/>
            <person name="White O."/>
            <person name="Clayton R.A."/>
            <person name="Kirkness E.F."/>
            <person name="Kerlavage A.R."/>
            <person name="Bult C.J."/>
            <person name="Tomb J.-F."/>
            <person name="Dougherty B.A."/>
            <person name="Merrick J.M."/>
            <person name="McKenney K."/>
            <person name="Sutton G.G."/>
            <person name="FitzHugh W."/>
            <person name="Fields C.A."/>
            <person name="Gocayne J.D."/>
            <person name="Scott J.D."/>
            <person name="Shirley R."/>
            <person name="Liu L.-I."/>
            <person name="Glodek A."/>
            <person name="Kelley J.M."/>
            <person name="Weidman J.F."/>
            <person name="Phillips C.A."/>
            <person name="Spriggs T."/>
            <person name="Hedblom E."/>
            <person name="Cotton M.D."/>
            <person name="Utterback T.R."/>
            <person name="Hanna M.C."/>
            <person name="Nguyen D.T."/>
            <person name="Saudek D.M."/>
            <person name="Brandon R.C."/>
            <person name="Fine L.D."/>
            <person name="Fritchman J.L."/>
            <person name="Fuhrmann J.L."/>
            <person name="Geoghagen N.S.M."/>
            <person name="Gnehm C.L."/>
            <person name="McDonald L.A."/>
            <person name="Small K.V."/>
            <person name="Fraser C.M."/>
            <person name="Smith H.O."/>
            <person name="Venter J.C."/>
        </authorList>
    </citation>
    <scope>NUCLEOTIDE SEQUENCE [LARGE SCALE GENOMIC DNA]</scope>
    <source>
        <strain>ATCC 51907 / DSM 11121 / KW20 / Rd</strain>
    </source>
</reference>
<dbReference type="EMBL" id="L42023">
    <property type="protein sequence ID" value="AAC21771.1"/>
    <property type="molecule type" value="Genomic_DNA"/>
</dbReference>
<dbReference type="PIR" id="E64142">
    <property type="entry name" value="E64142"/>
</dbReference>
<dbReference type="RefSeq" id="NP_438266.1">
    <property type="nucleotide sequence ID" value="NC_000907.1"/>
</dbReference>
<dbReference type="SMR" id="P44509"/>
<dbReference type="STRING" id="71421.HI_0093"/>
<dbReference type="DNASU" id="950994"/>
<dbReference type="EnsemblBacteria" id="AAC21771">
    <property type="protein sequence ID" value="AAC21771"/>
    <property type="gene ID" value="HI_0093"/>
</dbReference>
<dbReference type="KEGG" id="hin:HI_0093"/>
<dbReference type="PATRIC" id="fig|71421.8.peg.94"/>
<dbReference type="eggNOG" id="COG3835">
    <property type="taxonomic scope" value="Bacteria"/>
</dbReference>
<dbReference type="HOGENOM" id="CLU_043769_1_1_6"/>
<dbReference type="OrthoDB" id="9792148at2"/>
<dbReference type="PhylomeDB" id="P44509"/>
<dbReference type="BioCyc" id="HINF71421:G1GJ1-98-MONOMER"/>
<dbReference type="Proteomes" id="UP000000579">
    <property type="component" value="Chromosome"/>
</dbReference>
<dbReference type="GO" id="GO:0003700">
    <property type="term" value="F:DNA-binding transcription factor activity"/>
    <property type="evidence" value="ECO:0000318"/>
    <property type="project" value="GO_Central"/>
</dbReference>
<dbReference type="GO" id="GO:0045893">
    <property type="term" value="P:positive regulation of DNA-templated transcription"/>
    <property type="evidence" value="ECO:0000318"/>
    <property type="project" value="GO_Central"/>
</dbReference>
<dbReference type="Gene3D" id="1.10.10.2840">
    <property type="entry name" value="PucR C-terminal helix-turn-helix domain"/>
    <property type="match status" value="1"/>
</dbReference>
<dbReference type="InterPro" id="IPR051448">
    <property type="entry name" value="CdaR-like_regulators"/>
</dbReference>
<dbReference type="InterPro" id="IPR041522">
    <property type="entry name" value="CdaR_GGDEF"/>
</dbReference>
<dbReference type="InterPro" id="IPR008599">
    <property type="entry name" value="Diacid_rec"/>
</dbReference>
<dbReference type="InterPro" id="IPR025736">
    <property type="entry name" value="PucR_C-HTH_dom"/>
</dbReference>
<dbReference type="InterPro" id="IPR042070">
    <property type="entry name" value="PucR_C-HTH_sf"/>
</dbReference>
<dbReference type="PANTHER" id="PTHR33744">
    <property type="entry name" value="CARBOHYDRATE DIACID REGULATOR"/>
    <property type="match status" value="1"/>
</dbReference>
<dbReference type="PANTHER" id="PTHR33744:SF15">
    <property type="entry name" value="CARBOHYDRATE DIACID REGULATOR"/>
    <property type="match status" value="1"/>
</dbReference>
<dbReference type="Pfam" id="PF05651">
    <property type="entry name" value="Diacid_rec"/>
    <property type="match status" value="1"/>
</dbReference>
<dbReference type="Pfam" id="PF17853">
    <property type="entry name" value="GGDEF_2"/>
    <property type="match status" value="1"/>
</dbReference>
<dbReference type="Pfam" id="PF13556">
    <property type="entry name" value="HTH_30"/>
    <property type="match status" value="1"/>
</dbReference>
<comment type="similarity">
    <text evidence="1">Belongs to the CdaR family.</text>
</comment>
<accession>P44509</accession>
<organism>
    <name type="scientific">Haemophilus influenzae (strain ATCC 51907 / DSM 11121 / KW20 / Rd)</name>
    <dbReference type="NCBI Taxonomy" id="71421"/>
    <lineage>
        <taxon>Bacteria</taxon>
        <taxon>Pseudomonadati</taxon>
        <taxon>Pseudomonadota</taxon>
        <taxon>Gammaproteobacteria</taxon>
        <taxon>Pasteurellales</taxon>
        <taxon>Pasteurellaceae</taxon>
        <taxon>Haemophilus</taxon>
    </lineage>
</organism>
<keyword id="KW-1185">Reference proteome</keyword>